<feature type="chain" id="PRO_0000154578" description="Large ribosomal subunit protein uL10">
    <location>
        <begin position="1"/>
        <end position="181"/>
    </location>
</feature>
<protein>
    <recommendedName>
        <fullName evidence="1">Large ribosomal subunit protein uL10</fullName>
    </recommendedName>
    <alternativeName>
        <fullName evidence="2">50S ribosomal protein L10</fullName>
    </alternativeName>
</protein>
<sequence length="181" mass="19438">MGRTLENKKEIVADLKETLGESTLALVIEYQGLTVAEITDLRKRLRPSGTVCKVTKNTLMGIAIQDDEKWQPLSELLKGSSAFLLVKEDFSSAIKAYQEFQKVTKKTELRGGVMEGRLLKEPDVKALGDLPSKEQLMGQIAGAINALATKIAVGINEVPGGLARALQAVADKENGGDDSAA</sequence>
<comment type="function">
    <text evidence="1">Forms part of the ribosomal stalk, playing a central role in the interaction of the ribosome with GTP-bound translation factors.</text>
</comment>
<comment type="subunit">
    <text evidence="1">Part of the ribosomal stalk of the 50S ribosomal subunit. The N-terminus interacts with L11 and the large rRNA to form the base of the stalk. The C-terminus forms an elongated spine to which L12 dimers bind in a sequential fashion forming a multimeric L10(L12)X complex.</text>
</comment>
<comment type="similarity">
    <text evidence="1">Belongs to the universal ribosomal protein uL10 family.</text>
</comment>
<accession>Q8YLJ6</accession>
<organism>
    <name type="scientific">Nostoc sp. (strain PCC 7120 / SAG 25.82 / UTEX 2576)</name>
    <dbReference type="NCBI Taxonomy" id="103690"/>
    <lineage>
        <taxon>Bacteria</taxon>
        <taxon>Bacillati</taxon>
        <taxon>Cyanobacteriota</taxon>
        <taxon>Cyanophyceae</taxon>
        <taxon>Nostocales</taxon>
        <taxon>Nostocaceae</taxon>
        <taxon>Nostoc</taxon>
    </lineage>
</organism>
<evidence type="ECO:0000255" key="1">
    <source>
        <dbReference type="HAMAP-Rule" id="MF_00362"/>
    </source>
</evidence>
<evidence type="ECO:0000305" key="2"/>
<keyword id="KW-1185">Reference proteome</keyword>
<keyword id="KW-0687">Ribonucleoprotein</keyword>
<keyword id="KW-0689">Ribosomal protein</keyword>
<keyword id="KW-0694">RNA-binding</keyword>
<keyword id="KW-0699">rRNA-binding</keyword>
<reference key="1">
    <citation type="journal article" date="2001" name="DNA Res.">
        <title>Complete genomic sequence of the filamentous nitrogen-fixing cyanobacterium Anabaena sp. strain PCC 7120.</title>
        <authorList>
            <person name="Kaneko T."/>
            <person name="Nakamura Y."/>
            <person name="Wolk C.P."/>
            <person name="Kuritz T."/>
            <person name="Sasamoto S."/>
            <person name="Watanabe A."/>
            <person name="Iriguchi M."/>
            <person name="Ishikawa A."/>
            <person name="Kawashima K."/>
            <person name="Kimura T."/>
            <person name="Kishida Y."/>
            <person name="Kohara M."/>
            <person name="Matsumoto M."/>
            <person name="Matsuno A."/>
            <person name="Muraki A."/>
            <person name="Nakazaki N."/>
            <person name="Shimpo S."/>
            <person name="Sugimoto M."/>
            <person name="Takazawa M."/>
            <person name="Yamada M."/>
            <person name="Yasuda M."/>
            <person name="Tabata S."/>
        </authorList>
    </citation>
    <scope>NUCLEOTIDE SEQUENCE [LARGE SCALE GENOMIC DNA]</scope>
    <source>
        <strain>PCC 7120 / SAG 25.82 / UTEX 2576</strain>
    </source>
</reference>
<name>RL10_NOSS1</name>
<proteinExistence type="inferred from homology"/>
<gene>
    <name evidence="1" type="primary">rplJ</name>
    <name evidence="1" type="synonym">rpl10</name>
    <name type="ordered locus">alr5302</name>
</gene>
<dbReference type="EMBL" id="BA000019">
    <property type="protein sequence ID" value="BAB77001.1"/>
    <property type="molecule type" value="Genomic_DNA"/>
</dbReference>
<dbReference type="PIR" id="AF2468">
    <property type="entry name" value="AF2468"/>
</dbReference>
<dbReference type="RefSeq" id="WP_010999426.1">
    <property type="nucleotide sequence ID" value="NZ_RSCN01000005.1"/>
</dbReference>
<dbReference type="SMR" id="Q8YLJ6"/>
<dbReference type="STRING" id="103690.gene:10497363"/>
<dbReference type="KEGG" id="ana:alr5302"/>
<dbReference type="eggNOG" id="COG0244">
    <property type="taxonomic scope" value="Bacteria"/>
</dbReference>
<dbReference type="OrthoDB" id="9808307at2"/>
<dbReference type="Proteomes" id="UP000002483">
    <property type="component" value="Chromosome"/>
</dbReference>
<dbReference type="GO" id="GO:0015934">
    <property type="term" value="C:large ribosomal subunit"/>
    <property type="evidence" value="ECO:0007669"/>
    <property type="project" value="InterPro"/>
</dbReference>
<dbReference type="GO" id="GO:0070180">
    <property type="term" value="F:large ribosomal subunit rRNA binding"/>
    <property type="evidence" value="ECO:0007669"/>
    <property type="project" value="UniProtKB-UniRule"/>
</dbReference>
<dbReference type="GO" id="GO:0003735">
    <property type="term" value="F:structural constituent of ribosome"/>
    <property type="evidence" value="ECO:0007669"/>
    <property type="project" value="InterPro"/>
</dbReference>
<dbReference type="GO" id="GO:0006412">
    <property type="term" value="P:translation"/>
    <property type="evidence" value="ECO:0007669"/>
    <property type="project" value="UniProtKB-UniRule"/>
</dbReference>
<dbReference type="CDD" id="cd05797">
    <property type="entry name" value="Ribosomal_L10"/>
    <property type="match status" value="1"/>
</dbReference>
<dbReference type="Gene3D" id="3.30.70.1730">
    <property type="match status" value="1"/>
</dbReference>
<dbReference type="Gene3D" id="6.10.250.290">
    <property type="match status" value="1"/>
</dbReference>
<dbReference type="HAMAP" id="MF_00362">
    <property type="entry name" value="Ribosomal_uL10"/>
    <property type="match status" value="1"/>
</dbReference>
<dbReference type="InterPro" id="IPR001790">
    <property type="entry name" value="Ribosomal_uL10"/>
</dbReference>
<dbReference type="InterPro" id="IPR043141">
    <property type="entry name" value="Ribosomal_uL10-like_sf"/>
</dbReference>
<dbReference type="InterPro" id="IPR022973">
    <property type="entry name" value="Ribosomal_uL10_bac"/>
</dbReference>
<dbReference type="InterPro" id="IPR047865">
    <property type="entry name" value="Ribosomal_uL10_bac_type"/>
</dbReference>
<dbReference type="InterPro" id="IPR002363">
    <property type="entry name" value="Ribosomal_uL10_CS_bac"/>
</dbReference>
<dbReference type="NCBIfam" id="NF000955">
    <property type="entry name" value="PRK00099.1-1"/>
    <property type="match status" value="1"/>
</dbReference>
<dbReference type="PANTHER" id="PTHR11560">
    <property type="entry name" value="39S RIBOSOMAL PROTEIN L10, MITOCHONDRIAL"/>
    <property type="match status" value="1"/>
</dbReference>
<dbReference type="Pfam" id="PF00466">
    <property type="entry name" value="Ribosomal_L10"/>
    <property type="match status" value="1"/>
</dbReference>
<dbReference type="SUPFAM" id="SSF160369">
    <property type="entry name" value="Ribosomal protein L10-like"/>
    <property type="match status" value="1"/>
</dbReference>
<dbReference type="PROSITE" id="PS01109">
    <property type="entry name" value="RIBOSOMAL_L10"/>
    <property type="match status" value="1"/>
</dbReference>